<sequence>MLIVADENIPLIEEFFAGFGEIRRFPGRAIDRATVEQADVLLVRSVTQVDRQLLEGSPVRFVGTCTIGTDHLDLEHFQQAGITWSSAPGCNARGVVDYVLGSLLTLAEIEGVDLAQRCYGVVGAGEVGGRLIEVLRGLGWNVLVCDPQRQAAEGGDYVSLEQLLERCDVISLHTPLTKSGQDSTWHLLDRQRLNRLRHGTWLINAARGPVVDNRALAEVLRQREDLQAVLDVWEEEPTVDASLADLCVLATPHIAGYSLDGKQRGTAQIYQAYCRFLGQAEQVSLSALLPAPWVPQVSLNANADPAWALAMICRAVYDPRRDDADFRRSLSDDVAQQRSAFDGLRKHYPERREIDGLEVRIQGESAALSRIVRALGAREA</sequence>
<gene>
    <name evidence="1" type="primary">pdxB</name>
    <name type="ordered locus">PFL_1933</name>
</gene>
<organism>
    <name type="scientific">Pseudomonas fluorescens (strain ATCC BAA-477 / NRRL B-23932 / Pf-5)</name>
    <dbReference type="NCBI Taxonomy" id="220664"/>
    <lineage>
        <taxon>Bacteria</taxon>
        <taxon>Pseudomonadati</taxon>
        <taxon>Pseudomonadota</taxon>
        <taxon>Gammaproteobacteria</taxon>
        <taxon>Pseudomonadales</taxon>
        <taxon>Pseudomonadaceae</taxon>
        <taxon>Pseudomonas</taxon>
    </lineage>
</organism>
<proteinExistence type="inferred from homology"/>
<accession>Q4KFD1</accession>
<reference key="1">
    <citation type="journal article" date="2005" name="Nat. Biotechnol.">
        <title>Complete genome sequence of the plant commensal Pseudomonas fluorescens Pf-5.</title>
        <authorList>
            <person name="Paulsen I.T."/>
            <person name="Press C.M."/>
            <person name="Ravel J."/>
            <person name="Kobayashi D.Y."/>
            <person name="Myers G.S.A."/>
            <person name="Mavrodi D.V."/>
            <person name="DeBoy R.T."/>
            <person name="Seshadri R."/>
            <person name="Ren Q."/>
            <person name="Madupu R."/>
            <person name="Dodson R.J."/>
            <person name="Durkin A.S."/>
            <person name="Brinkac L.M."/>
            <person name="Daugherty S.C."/>
            <person name="Sullivan S.A."/>
            <person name="Rosovitz M.J."/>
            <person name="Gwinn M.L."/>
            <person name="Zhou L."/>
            <person name="Schneider D.J."/>
            <person name="Cartinhour S.W."/>
            <person name="Nelson W.C."/>
            <person name="Weidman J."/>
            <person name="Watkins K."/>
            <person name="Tran K."/>
            <person name="Khouri H."/>
            <person name="Pierson E.A."/>
            <person name="Pierson L.S. III"/>
            <person name="Thomashow L.S."/>
            <person name="Loper J.E."/>
        </authorList>
    </citation>
    <scope>NUCLEOTIDE SEQUENCE [LARGE SCALE GENOMIC DNA]</scope>
    <source>
        <strain>ATCC BAA-477 / NRRL B-23932 / Pf-5</strain>
    </source>
</reference>
<protein>
    <recommendedName>
        <fullName evidence="1">Erythronate-4-phosphate dehydrogenase</fullName>
        <ecNumber evidence="1">1.1.1.290</ecNumber>
    </recommendedName>
</protein>
<dbReference type="EC" id="1.1.1.290" evidence="1"/>
<dbReference type="EMBL" id="CP000076">
    <property type="protein sequence ID" value="AAY91220.1"/>
    <property type="molecule type" value="Genomic_DNA"/>
</dbReference>
<dbReference type="RefSeq" id="WP_011060253.1">
    <property type="nucleotide sequence ID" value="NC_004129.6"/>
</dbReference>
<dbReference type="SMR" id="Q4KFD1"/>
<dbReference type="STRING" id="220664.PFL_1933"/>
<dbReference type="GeneID" id="57474977"/>
<dbReference type="KEGG" id="pfl:PFL_1933"/>
<dbReference type="PATRIC" id="fig|220664.5.peg.1972"/>
<dbReference type="eggNOG" id="COG0111">
    <property type="taxonomic scope" value="Bacteria"/>
</dbReference>
<dbReference type="HOGENOM" id="CLU_019796_4_0_6"/>
<dbReference type="UniPathway" id="UPA00244">
    <property type="reaction ID" value="UER00310"/>
</dbReference>
<dbReference type="Proteomes" id="UP000008540">
    <property type="component" value="Chromosome"/>
</dbReference>
<dbReference type="GO" id="GO:0005829">
    <property type="term" value="C:cytosol"/>
    <property type="evidence" value="ECO:0007669"/>
    <property type="project" value="TreeGrafter"/>
</dbReference>
<dbReference type="GO" id="GO:0033711">
    <property type="term" value="F:4-phosphoerythronate dehydrogenase activity"/>
    <property type="evidence" value="ECO:0007669"/>
    <property type="project" value="UniProtKB-EC"/>
</dbReference>
<dbReference type="GO" id="GO:0051287">
    <property type="term" value="F:NAD binding"/>
    <property type="evidence" value="ECO:0007669"/>
    <property type="project" value="InterPro"/>
</dbReference>
<dbReference type="GO" id="GO:0046983">
    <property type="term" value="F:protein dimerization activity"/>
    <property type="evidence" value="ECO:0007669"/>
    <property type="project" value="InterPro"/>
</dbReference>
<dbReference type="GO" id="GO:0036001">
    <property type="term" value="P:'de novo' pyridoxal 5'-phosphate biosynthetic process"/>
    <property type="evidence" value="ECO:0007669"/>
    <property type="project" value="TreeGrafter"/>
</dbReference>
<dbReference type="GO" id="GO:0008615">
    <property type="term" value="P:pyridoxine biosynthetic process"/>
    <property type="evidence" value="ECO:0007669"/>
    <property type="project" value="UniProtKB-UniRule"/>
</dbReference>
<dbReference type="CDD" id="cd12158">
    <property type="entry name" value="ErythrP_dh"/>
    <property type="match status" value="1"/>
</dbReference>
<dbReference type="Gene3D" id="3.30.1370.170">
    <property type="match status" value="1"/>
</dbReference>
<dbReference type="Gene3D" id="3.40.50.720">
    <property type="entry name" value="NAD(P)-binding Rossmann-like Domain"/>
    <property type="match status" value="2"/>
</dbReference>
<dbReference type="HAMAP" id="MF_01825">
    <property type="entry name" value="PdxB"/>
    <property type="match status" value="1"/>
</dbReference>
<dbReference type="InterPro" id="IPR006139">
    <property type="entry name" value="D-isomer_2_OHA_DH_cat_dom"/>
</dbReference>
<dbReference type="InterPro" id="IPR029753">
    <property type="entry name" value="D-isomer_DH_CS"/>
</dbReference>
<dbReference type="InterPro" id="IPR006140">
    <property type="entry name" value="D-isomer_DH_NAD-bd"/>
</dbReference>
<dbReference type="InterPro" id="IPR020921">
    <property type="entry name" value="Erythronate-4-P_DHase"/>
</dbReference>
<dbReference type="InterPro" id="IPR024531">
    <property type="entry name" value="Erythronate-4-P_DHase_dimer"/>
</dbReference>
<dbReference type="InterPro" id="IPR036291">
    <property type="entry name" value="NAD(P)-bd_dom_sf"/>
</dbReference>
<dbReference type="InterPro" id="IPR038251">
    <property type="entry name" value="PdxB_dimer_sf"/>
</dbReference>
<dbReference type="NCBIfam" id="NF001309">
    <property type="entry name" value="PRK00257.1"/>
    <property type="match status" value="1"/>
</dbReference>
<dbReference type="PANTHER" id="PTHR42938">
    <property type="entry name" value="FORMATE DEHYDROGENASE 1"/>
    <property type="match status" value="1"/>
</dbReference>
<dbReference type="PANTHER" id="PTHR42938:SF9">
    <property type="entry name" value="FORMATE DEHYDROGENASE 1"/>
    <property type="match status" value="1"/>
</dbReference>
<dbReference type="Pfam" id="PF00389">
    <property type="entry name" value="2-Hacid_dh"/>
    <property type="match status" value="1"/>
</dbReference>
<dbReference type="Pfam" id="PF02826">
    <property type="entry name" value="2-Hacid_dh_C"/>
    <property type="match status" value="1"/>
</dbReference>
<dbReference type="Pfam" id="PF11890">
    <property type="entry name" value="DUF3410"/>
    <property type="match status" value="1"/>
</dbReference>
<dbReference type="SUPFAM" id="SSF52283">
    <property type="entry name" value="Formate/glycerate dehydrogenase catalytic domain-like"/>
    <property type="match status" value="1"/>
</dbReference>
<dbReference type="SUPFAM" id="SSF51735">
    <property type="entry name" value="NAD(P)-binding Rossmann-fold domains"/>
    <property type="match status" value="1"/>
</dbReference>
<dbReference type="PROSITE" id="PS00671">
    <property type="entry name" value="D_2_HYDROXYACID_DH_3"/>
    <property type="match status" value="1"/>
</dbReference>
<feature type="chain" id="PRO_0000297452" description="Erythronate-4-phosphate dehydrogenase">
    <location>
        <begin position="1"/>
        <end position="380"/>
    </location>
</feature>
<feature type="active site" evidence="1">
    <location>
        <position position="207"/>
    </location>
</feature>
<feature type="active site" evidence="1">
    <location>
        <position position="236"/>
    </location>
</feature>
<feature type="active site" description="Proton donor" evidence="1">
    <location>
        <position position="253"/>
    </location>
</feature>
<feature type="binding site" evidence="1">
    <location>
        <position position="45"/>
    </location>
    <ligand>
        <name>substrate</name>
    </ligand>
</feature>
<feature type="binding site" evidence="1">
    <location>
        <position position="66"/>
    </location>
    <ligand>
        <name>substrate</name>
    </ligand>
</feature>
<feature type="binding site" evidence="1">
    <location>
        <position position="146"/>
    </location>
    <ligand>
        <name>NAD(+)</name>
        <dbReference type="ChEBI" id="CHEBI:57540"/>
    </ligand>
</feature>
<feature type="binding site" evidence="1">
    <location>
        <position position="174"/>
    </location>
    <ligand>
        <name>NAD(+)</name>
        <dbReference type="ChEBI" id="CHEBI:57540"/>
    </ligand>
</feature>
<feature type="binding site" evidence="1">
    <location>
        <position position="231"/>
    </location>
    <ligand>
        <name>NAD(+)</name>
        <dbReference type="ChEBI" id="CHEBI:57540"/>
    </ligand>
</feature>
<feature type="binding site" evidence="1">
    <location>
        <position position="256"/>
    </location>
    <ligand>
        <name>NAD(+)</name>
        <dbReference type="ChEBI" id="CHEBI:57540"/>
    </ligand>
</feature>
<feature type="binding site" evidence="1">
    <location>
        <position position="257"/>
    </location>
    <ligand>
        <name>substrate</name>
    </ligand>
</feature>
<keyword id="KW-0963">Cytoplasm</keyword>
<keyword id="KW-0520">NAD</keyword>
<keyword id="KW-0560">Oxidoreductase</keyword>
<keyword id="KW-0664">Pyridoxine biosynthesis</keyword>
<evidence type="ECO:0000255" key="1">
    <source>
        <dbReference type="HAMAP-Rule" id="MF_01825"/>
    </source>
</evidence>
<comment type="function">
    <text evidence="1">Catalyzes the oxidation of erythronate-4-phosphate to 3-hydroxy-2-oxo-4-phosphonooxybutanoate.</text>
</comment>
<comment type="catalytic activity">
    <reaction evidence="1">
        <text>4-phospho-D-erythronate + NAD(+) = (R)-3-hydroxy-2-oxo-4-phosphooxybutanoate + NADH + H(+)</text>
        <dbReference type="Rhea" id="RHEA:18829"/>
        <dbReference type="ChEBI" id="CHEBI:15378"/>
        <dbReference type="ChEBI" id="CHEBI:57540"/>
        <dbReference type="ChEBI" id="CHEBI:57945"/>
        <dbReference type="ChEBI" id="CHEBI:58538"/>
        <dbReference type="ChEBI" id="CHEBI:58766"/>
        <dbReference type="EC" id="1.1.1.290"/>
    </reaction>
</comment>
<comment type="pathway">
    <text evidence="1">Cofactor biosynthesis; pyridoxine 5'-phosphate biosynthesis; pyridoxine 5'-phosphate from D-erythrose 4-phosphate: step 2/5.</text>
</comment>
<comment type="subunit">
    <text evidence="1">Homodimer.</text>
</comment>
<comment type="subcellular location">
    <subcellularLocation>
        <location evidence="1">Cytoplasm</location>
    </subcellularLocation>
</comment>
<comment type="similarity">
    <text evidence="1">Belongs to the D-isomer specific 2-hydroxyacid dehydrogenase family. PdxB subfamily.</text>
</comment>
<name>PDXB_PSEF5</name>